<gene>
    <name evidence="2" type="primary">guaB</name>
    <name type="synonym">impD</name>
    <name type="ordered locus">SpyM3_1857</name>
</gene>
<proteinExistence type="inferred from homology"/>
<accession>P0DB88</accession>
<accession>Q8K5G1</accession>
<comment type="function">
    <text evidence="2">Catalyzes the conversion of inosine 5'-phosphate (IMP) to xanthosine 5'-phosphate (XMP), the first committed and rate-limiting step in the de novo synthesis of guanine nucleotides, and therefore plays an important role in the regulation of cell growth.</text>
</comment>
<comment type="catalytic activity">
    <reaction evidence="2">
        <text>IMP + NAD(+) + H2O = XMP + NADH + H(+)</text>
        <dbReference type="Rhea" id="RHEA:11708"/>
        <dbReference type="ChEBI" id="CHEBI:15377"/>
        <dbReference type="ChEBI" id="CHEBI:15378"/>
        <dbReference type="ChEBI" id="CHEBI:57464"/>
        <dbReference type="ChEBI" id="CHEBI:57540"/>
        <dbReference type="ChEBI" id="CHEBI:57945"/>
        <dbReference type="ChEBI" id="CHEBI:58053"/>
        <dbReference type="EC" id="1.1.1.205"/>
    </reaction>
</comment>
<comment type="cofactor">
    <cofactor evidence="2">
        <name>K(+)</name>
        <dbReference type="ChEBI" id="CHEBI:29103"/>
    </cofactor>
</comment>
<comment type="activity regulation">
    <text evidence="2">Mycophenolic acid (MPA) is a non-competitive inhibitor that prevents formation of the closed enzyme conformation by binding to the same site as the amobile flap. In contrast, mizoribine monophosphate (MZP) is a competitive inhibitor that induces the closed conformation. MPA is a potent inhibitor of mammalian IMPDHs but a poor inhibitor of the bacterial enzymes. MZP is a more potent inhibitor of bacterial IMPDH.</text>
</comment>
<comment type="pathway">
    <text evidence="2">Purine metabolism; XMP biosynthesis via de novo pathway; XMP from IMP: step 1/1.</text>
</comment>
<comment type="subunit">
    <text evidence="2">Homotetramer.</text>
</comment>
<comment type="similarity">
    <text evidence="2">Belongs to the IMPDH/GMPR family.</text>
</comment>
<evidence type="ECO:0000250" key="1"/>
<evidence type="ECO:0000255" key="2">
    <source>
        <dbReference type="HAMAP-Rule" id="MF_01964"/>
    </source>
</evidence>
<name>IMDH_STRP3</name>
<reference key="1">
    <citation type="journal article" date="2002" name="Proc. Natl. Acad. Sci. U.S.A.">
        <title>Genome sequence of a serotype M3 strain of group A Streptococcus: phage-encoded toxins, the high-virulence phenotype, and clone emergence.</title>
        <authorList>
            <person name="Beres S.B."/>
            <person name="Sylva G.L."/>
            <person name="Barbian K.D."/>
            <person name="Lei B."/>
            <person name="Hoff J.S."/>
            <person name="Mammarella N.D."/>
            <person name="Liu M.-Y."/>
            <person name="Smoot J.C."/>
            <person name="Porcella S.F."/>
            <person name="Parkins L.D."/>
            <person name="Campbell D.S."/>
            <person name="Smith T.M."/>
            <person name="McCormick J.K."/>
            <person name="Leung D.Y.M."/>
            <person name="Schlievert P.M."/>
            <person name="Musser J.M."/>
        </authorList>
    </citation>
    <scope>NUCLEOTIDE SEQUENCE [LARGE SCALE GENOMIC DNA]</scope>
    <source>
        <strain>ATCC BAA-595 / MGAS315</strain>
    </source>
</reference>
<protein>
    <recommendedName>
        <fullName evidence="2">Inosine-5'-monophosphate dehydrogenase</fullName>
        <shortName evidence="2">IMP dehydrogenase</shortName>
        <shortName evidence="2">IMPD</shortName>
        <shortName evidence="2">IMPDH</shortName>
        <ecNumber evidence="2">1.1.1.205</ecNumber>
    </recommendedName>
</protein>
<dbReference type="EC" id="1.1.1.205" evidence="2"/>
<dbReference type="EMBL" id="AE014074">
    <property type="protein sequence ID" value="AAM80464.1"/>
    <property type="molecule type" value="Genomic_DNA"/>
</dbReference>
<dbReference type="RefSeq" id="WP_011055116.1">
    <property type="nucleotide sequence ID" value="NC_004070.1"/>
</dbReference>
<dbReference type="SMR" id="P0DB88"/>
<dbReference type="KEGG" id="spg:SpyM3_1857"/>
<dbReference type="HOGENOM" id="CLU_022552_1_0_9"/>
<dbReference type="UniPathway" id="UPA00601">
    <property type="reaction ID" value="UER00295"/>
</dbReference>
<dbReference type="Proteomes" id="UP000000564">
    <property type="component" value="Chromosome"/>
</dbReference>
<dbReference type="GO" id="GO:0003938">
    <property type="term" value="F:IMP dehydrogenase activity"/>
    <property type="evidence" value="ECO:0007669"/>
    <property type="project" value="UniProtKB-UniRule"/>
</dbReference>
<dbReference type="GO" id="GO:0046872">
    <property type="term" value="F:metal ion binding"/>
    <property type="evidence" value="ECO:0007669"/>
    <property type="project" value="UniProtKB-UniRule"/>
</dbReference>
<dbReference type="GO" id="GO:0000166">
    <property type="term" value="F:nucleotide binding"/>
    <property type="evidence" value="ECO:0007669"/>
    <property type="project" value="UniProtKB-UniRule"/>
</dbReference>
<dbReference type="GO" id="GO:0006177">
    <property type="term" value="P:GMP biosynthetic process"/>
    <property type="evidence" value="ECO:0007669"/>
    <property type="project" value="UniProtKB-UniRule"/>
</dbReference>
<dbReference type="GO" id="GO:0006183">
    <property type="term" value="P:GTP biosynthetic process"/>
    <property type="evidence" value="ECO:0007669"/>
    <property type="project" value="TreeGrafter"/>
</dbReference>
<dbReference type="CDD" id="cd04601">
    <property type="entry name" value="CBS_pair_IMPDH"/>
    <property type="match status" value="1"/>
</dbReference>
<dbReference type="CDD" id="cd00381">
    <property type="entry name" value="IMPDH"/>
    <property type="match status" value="1"/>
</dbReference>
<dbReference type="FunFam" id="3.20.20.70:FF:000003">
    <property type="entry name" value="GMP reductase"/>
    <property type="match status" value="1"/>
</dbReference>
<dbReference type="Gene3D" id="3.20.20.70">
    <property type="entry name" value="Aldolase class I"/>
    <property type="match status" value="1"/>
</dbReference>
<dbReference type="HAMAP" id="MF_01964">
    <property type="entry name" value="IMPDH"/>
    <property type="match status" value="1"/>
</dbReference>
<dbReference type="InterPro" id="IPR013785">
    <property type="entry name" value="Aldolase_TIM"/>
</dbReference>
<dbReference type="InterPro" id="IPR000644">
    <property type="entry name" value="CBS_dom"/>
</dbReference>
<dbReference type="InterPro" id="IPR046342">
    <property type="entry name" value="CBS_dom_sf"/>
</dbReference>
<dbReference type="InterPro" id="IPR005990">
    <property type="entry name" value="IMP_DH"/>
</dbReference>
<dbReference type="InterPro" id="IPR015875">
    <property type="entry name" value="IMP_DH/GMP_Rdtase_CS"/>
</dbReference>
<dbReference type="InterPro" id="IPR001093">
    <property type="entry name" value="IMP_DH_GMPRt"/>
</dbReference>
<dbReference type="NCBIfam" id="TIGR01302">
    <property type="entry name" value="IMP_dehydrog"/>
    <property type="match status" value="1"/>
</dbReference>
<dbReference type="PANTHER" id="PTHR11911:SF111">
    <property type="entry name" value="INOSINE-5'-MONOPHOSPHATE DEHYDROGENASE"/>
    <property type="match status" value="1"/>
</dbReference>
<dbReference type="PANTHER" id="PTHR11911">
    <property type="entry name" value="INOSINE-5-MONOPHOSPHATE DEHYDROGENASE RELATED"/>
    <property type="match status" value="1"/>
</dbReference>
<dbReference type="Pfam" id="PF00571">
    <property type="entry name" value="CBS"/>
    <property type="match status" value="2"/>
</dbReference>
<dbReference type="Pfam" id="PF00478">
    <property type="entry name" value="IMPDH"/>
    <property type="match status" value="1"/>
</dbReference>
<dbReference type="PIRSF" id="PIRSF000130">
    <property type="entry name" value="IMPDH"/>
    <property type="match status" value="1"/>
</dbReference>
<dbReference type="SMART" id="SM00116">
    <property type="entry name" value="CBS"/>
    <property type="match status" value="2"/>
</dbReference>
<dbReference type="SMART" id="SM01240">
    <property type="entry name" value="IMPDH"/>
    <property type="match status" value="1"/>
</dbReference>
<dbReference type="SUPFAM" id="SSF54631">
    <property type="entry name" value="CBS-domain pair"/>
    <property type="match status" value="1"/>
</dbReference>
<dbReference type="SUPFAM" id="SSF51412">
    <property type="entry name" value="Inosine monophosphate dehydrogenase (IMPDH)"/>
    <property type="match status" value="1"/>
</dbReference>
<dbReference type="PROSITE" id="PS51371">
    <property type="entry name" value="CBS"/>
    <property type="match status" value="2"/>
</dbReference>
<dbReference type="PROSITE" id="PS00487">
    <property type="entry name" value="IMP_DH_GMP_RED"/>
    <property type="match status" value="1"/>
</dbReference>
<sequence length="493" mass="52806">MSNWDTKFLKKGYTFDDVLLIPAESHVLPNEVDLKTKLADNLTLNIPIITAAMDTVTGSKMAIAIARAGGLGVIHKNMSITEQAEEVRKVKRSENGVIIDPFFLTPEHKVSEAEELMQRYRISGVPIVETLANRKLVGIITNRDMRFISNYNAPISEHMTSEHLVTAAVGTDLETAERILHEHRIEKLPLVDNSGRLSGLITIKDIEKVIEFPHAAKDEFGRLLVAAAVGVTSDTFERAEALFEAGADAIVIDTAHGHSAGVLRKIAEIRAHFPNRTLIAGNIATAEGARALYDAGVDVVKVGIGPGSICTTRVVAGVGVPQVTAIYDAAAVAREYGKTIIADGGIKYSGDIVKALAAGGNAVMLGSMFAGTDEAPGETEIYQGRKFKTYRGMGSIAAMKKGSSDRYFQGSVNEANKLVPEGIEGRVAYKGAASDIVFQMLGGIRSGMGYVGAGDIQELHENAQFVEMSGAGLIESHPHDVQITNEAPNYSVH</sequence>
<feature type="initiator methionine" description="Removed" evidence="1">
    <location>
        <position position="1"/>
    </location>
</feature>
<feature type="chain" id="PRO_0000093716" description="Inosine-5'-monophosphate dehydrogenase">
    <location>
        <begin position="2"/>
        <end position="493"/>
    </location>
</feature>
<feature type="domain" description="CBS 1" evidence="2">
    <location>
        <begin position="97"/>
        <end position="155"/>
    </location>
</feature>
<feature type="domain" description="CBS 2" evidence="2">
    <location>
        <begin position="159"/>
        <end position="219"/>
    </location>
</feature>
<feature type="active site" description="Thioimidate intermediate" evidence="2">
    <location>
        <position position="310"/>
    </location>
</feature>
<feature type="active site" description="Proton acceptor" evidence="2">
    <location>
        <position position="406"/>
    </location>
</feature>
<feature type="binding site" evidence="2">
    <location>
        <position position="253"/>
    </location>
    <ligand>
        <name>NAD(+)</name>
        <dbReference type="ChEBI" id="CHEBI:57540"/>
    </ligand>
</feature>
<feature type="binding site" evidence="2">
    <location>
        <begin position="303"/>
        <end position="305"/>
    </location>
    <ligand>
        <name>NAD(+)</name>
        <dbReference type="ChEBI" id="CHEBI:57540"/>
    </ligand>
</feature>
<feature type="binding site" description="in other chain" evidence="2">
    <location>
        <position position="305"/>
    </location>
    <ligand>
        <name>K(+)</name>
        <dbReference type="ChEBI" id="CHEBI:29103"/>
        <note>ligand shared between two tetrameric partners</note>
    </ligand>
</feature>
<feature type="binding site" description="in other chain" evidence="2">
    <location>
        <position position="307"/>
    </location>
    <ligand>
        <name>K(+)</name>
        <dbReference type="ChEBI" id="CHEBI:29103"/>
        <note>ligand shared between two tetrameric partners</note>
    </ligand>
</feature>
<feature type="binding site" evidence="2">
    <location>
        <position position="308"/>
    </location>
    <ligand>
        <name>IMP</name>
        <dbReference type="ChEBI" id="CHEBI:58053"/>
    </ligand>
</feature>
<feature type="binding site" description="in other chain" evidence="2">
    <location>
        <position position="310"/>
    </location>
    <ligand>
        <name>K(+)</name>
        <dbReference type="ChEBI" id="CHEBI:29103"/>
        <note>ligand shared between two tetrameric partners</note>
    </ligand>
</feature>
<feature type="binding site" evidence="2">
    <location>
        <begin position="343"/>
        <end position="345"/>
    </location>
    <ligand>
        <name>IMP</name>
        <dbReference type="ChEBI" id="CHEBI:58053"/>
    </ligand>
</feature>
<feature type="binding site" evidence="2">
    <location>
        <begin position="366"/>
        <end position="367"/>
    </location>
    <ligand>
        <name>IMP</name>
        <dbReference type="ChEBI" id="CHEBI:58053"/>
    </ligand>
</feature>
<feature type="binding site" evidence="2">
    <location>
        <begin position="390"/>
        <end position="394"/>
    </location>
    <ligand>
        <name>IMP</name>
        <dbReference type="ChEBI" id="CHEBI:58053"/>
    </ligand>
</feature>
<feature type="binding site" evidence="2">
    <location>
        <position position="421"/>
    </location>
    <ligand>
        <name>IMP</name>
        <dbReference type="ChEBI" id="CHEBI:58053"/>
    </ligand>
</feature>
<feature type="binding site" evidence="2">
    <location>
        <position position="475"/>
    </location>
    <ligand>
        <name>K(+)</name>
        <dbReference type="ChEBI" id="CHEBI:29103"/>
        <note>ligand shared between two tetrameric partners</note>
    </ligand>
</feature>
<feature type="binding site" evidence="2">
    <location>
        <position position="476"/>
    </location>
    <ligand>
        <name>K(+)</name>
        <dbReference type="ChEBI" id="CHEBI:29103"/>
        <note>ligand shared between two tetrameric partners</note>
    </ligand>
</feature>
<feature type="binding site" evidence="2">
    <location>
        <position position="477"/>
    </location>
    <ligand>
        <name>K(+)</name>
        <dbReference type="ChEBI" id="CHEBI:29103"/>
        <note>ligand shared between two tetrameric partners</note>
    </ligand>
</feature>
<keyword id="KW-0129">CBS domain</keyword>
<keyword id="KW-0332">GMP biosynthesis</keyword>
<keyword id="KW-0479">Metal-binding</keyword>
<keyword id="KW-0520">NAD</keyword>
<keyword id="KW-0560">Oxidoreductase</keyword>
<keyword id="KW-0630">Potassium</keyword>
<keyword id="KW-0658">Purine biosynthesis</keyword>
<keyword id="KW-0677">Repeat</keyword>
<organism>
    <name type="scientific">Streptococcus pyogenes serotype M3 (strain ATCC BAA-595 / MGAS315)</name>
    <dbReference type="NCBI Taxonomy" id="198466"/>
    <lineage>
        <taxon>Bacteria</taxon>
        <taxon>Bacillati</taxon>
        <taxon>Bacillota</taxon>
        <taxon>Bacilli</taxon>
        <taxon>Lactobacillales</taxon>
        <taxon>Streptococcaceae</taxon>
        <taxon>Streptococcus</taxon>
    </lineage>
</organism>